<protein>
    <recommendedName>
        <fullName evidence="1">Protein pelota homolog</fullName>
        <ecNumber evidence="1">3.1.-.-</ecNumber>
    </recommendedName>
</protein>
<sequence>MRVTNRSLRGREGEIAITAETLDDLWHLKYIIEKGDLVFALTKRKADSASDKLRPEKVEKVKVRLGIRVEEMEFHKFANRLRIHGPIEHGMDVGSYHTLNVEIGTNISIIKERWKNDQLQRIQDAEEAGKRPKVVIVAVEEGDADIGFVRHYGIEVYSHIRQSSGKRENGLRSEFFREIVDQLRHAVPEDASIVIAGPGFTKEDFLKYFHETEPEMASKALTEDTSMIGMSGFQEVLRRGAVDRIMQESRIARESSLMEDLLREISMDGKAAYGFADVKNALKYGAVETLLIADETLREGREKGEDIDKVLMEVEQAQGKVVVFSTAFEPGEKLHKLGGVAALLRFKVTG</sequence>
<comment type="function">
    <text evidence="1">May function in recognizing stalled ribosomes, interact with stem-loop structures in stalled mRNA molecules, and effect endonucleolytic cleavage of the mRNA. May play a role in the release non-functional ribosomes and degradation of damaged mRNAs. Has endoribonuclease activity.</text>
</comment>
<comment type="cofactor">
    <cofactor evidence="1">
        <name>a divalent metal cation</name>
        <dbReference type="ChEBI" id="CHEBI:60240"/>
    </cofactor>
</comment>
<comment type="subunit">
    <text evidence="1">Monomer.</text>
</comment>
<comment type="subcellular location">
    <subcellularLocation>
        <location evidence="1">Cytoplasm</location>
    </subcellularLocation>
</comment>
<comment type="domain">
    <text evidence="1">The N-terminal domain has the RNA-binding Sm fold. It harbors the endoribonuclease activity.</text>
</comment>
<comment type="similarity">
    <text evidence="1">Belongs to the eukaryotic release factor 1 family. Pelota subfamily.</text>
</comment>
<feature type="chain" id="PRO_0000361805" description="Protein pelota homolog">
    <location>
        <begin position="1"/>
        <end position="350"/>
    </location>
</feature>
<proteinExistence type="inferred from homology"/>
<keyword id="KW-0963">Cytoplasm</keyword>
<keyword id="KW-0255">Endonuclease</keyword>
<keyword id="KW-0378">Hydrolase</keyword>
<keyword id="KW-0479">Metal-binding</keyword>
<keyword id="KW-0540">Nuclease</keyword>
<keyword id="KW-1185">Reference proteome</keyword>
<evidence type="ECO:0000255" key="1">
    <source>
        <dbReference type="HAMAP-Rule" id="MF_01853"/>
    </source>
</evidence>
<dbReference type="EC" id="3.1.-.-" evidence="1"/>
<dbReference type="EMBL" id="AE010299">
    <property type="protein sequence ID" value="AAM04094.1"/>
    <property type="molecule type" value="Genomic_DNA"/>
</dbReference>
<dbReference type="RefSeq" id="WP_011020699.1">
    <property type="nucleotide sequence ID" value="NC_003552.1"/>
</dbReference>
<dbReference type="SMR" id="Q8TSZ1"/>
<dbReference type="FunCoup" id="Q8TSZ1">
    <property type="interactions" value="112"/>
</dbReference>
<dbReference type="STRING" id="188937.MA_0652"/>
<dbReference type="EnsemblBacteria" id="AAM04094">
    <property type="protein sequence ID" value="AAM04094"/>
    <property type="gene ID" value="MA_0652"/>
</dbReference>
<dbReference type="GeneID" id="1472544"/>
<dbReference type="KEGG" id="mac:MA_0652"/>
<dbReference type="HOGENOM" id="CLU_023334_0_0_2"/>
<dbReference type="InParanoid" id="Q8TSZ1"/>
<dbReference type="OrthoDB" id="31300at2157"/>
<dbReference type="PhylomeDB" id="Q8TSZ1"/>
<dbReference type="Proteomes" id="UP000002487">
    <property type="component" value="Chromosome"/>
</dbReference>
<dbReference type="GO" id="GO:0005737">
    <property type="term" value="C:cytoplasm"/>
    <property type="evidence" value="ECO:0000318"/>
    <property type="project" value="GO_Central"/>
</dbReference>
<dbReference type="GO" id="GO:0004519">
    <property type="term" value="F:endonuclease activity"/>
    <property type="evidence" value="ECO:0007669"/>
    <property type="project" value="UniProtKB-UniRule"/>
</dbReference>
<dbReference type="GO" id="GO:0046872">
    <property type="term" value="F:metal ion binding"/>
    <property type="evidence" value="ECO:0007669"/>
    <property type="project" value="UniProtKB-UniRule"/>
</dbReference>
<dbReference type="GO" id="GO:0070651">
    <property type="term" value="P:nonfunctional rRNA decay"/>
    <property type="evidence" value="ECO:0000318"/>
    <property type="project" value="GO_Central"/>
</dbReference>
<dbReference type="GO" id="GO:0070966">
    <property type="term" value="P:nuclear-transcribed mRNA catabolic process, no-go decay"/>
    <property type="evidence" value="ECO:0000318"/>
    <property type="project" value="GO_Central"/>
</dbReference>
<dbReference type="GO" id="GO:0070481">
    <property type="term" value="P:nuclear-transcribed mRNA catabolic process, non-stop decay"/>
    <property type="evidence" value="ECO:0007669"/>
    <property type="project" value="InterPro"/>
</dbReference>
<dbReference type="GO" id="GO:0032790">
    <property type="term" value="P:ribosome disassembly"/>
    <property type="evidence" value="ECO:0000318"/>
    <property type="project" value="GO_Central"/>
</dbReference>
<dbReference type="GO" id="GO:0071025">
    <property type="term" value="P:RNA surveillance"/>
    <property type="evidence" value="ECO:0007669"/>
    <property type="project" value="InterPro"/>
</dbReference>
<dbReference type="FunFam" id="2.30.30.870:FF:000002">
    <property type="entry name" value="Protein pelota homolog"/>
    <property type="match status" value="1"/>
</dbReference>
<dbReference type="FunFam" id="3.30.1330.30:FF:000059">
    <property type="entry name" value="Protein pelota homolog"/>
    <property type="match status" value="1"/>
</dbReference>
<dbReference type="FunFam" id="3.30.420.60:FF:000005">
    <property type="entry name" value="Protein pelota homolog"/>
    <property type="match status" value="1"/>
</dbReference>
<dbReference type="Gene3D" id="3.30.1330.30">
    <property type="match status" value="1"/>
</dbReference>
<dbReference type="Gene3D" id="3.30.420.60">
    <property type="entry name" value="eRF1 domain 2"/>
    <property type="match status" value="1"/>
</dbReference>
<dbReference type="Gene3D" id="2.30.30.870">
    <property type="entry name" value="Pelota, domain A"/>
    <property type="match status" value="1"/>
</dbReference>
<dbReference type="HAMAP" id="MF_01853">
    <property type="entry name" value="PelO"/>
    <property type="match status" value="1"/>
</dbReference>
<dbReference type="InterPro" id="IPR042226">
    <property type="entry name" value="eFR1_2_sf"/>
</dbReference>
<dbReference type="InterPro" id="IPR005140">
    <property type="entry name" value="eRF1_1_Pelota"/>
</dbReference>
<dbReference type="InterPro" id="IPR005141">
    <property type="entry name" value="eRF1_2"/>
</dbReference>
<dbReference type="InterPro" id="IPR005142">
    <property type="entry name" value="eRF1_3"/>
</dbReference>
<dbReference type="InterPro" id="IPR038069">
    <property type="entry name" value="Pelota/DOM34_N"/>
</dbReference>
<dbReference type="InterPro" id="IPR023521">
    <property type="entry name" value="Pelota_arc"/>
</dbReference>
<dbReference type="InterPro" id="IPR029064">
    <property type="entry name" value="Ribosomal_eL30-like_sf"/>
</dbReference>
<dbReference type="InterPro" id="IPR004405">
    <property type="entry name" value="Transl-rel_pelota"/>
</dbReference>
<dbReference type="NCBIfam" id="TIGR00111">
    <property type="entry name" value="pelota"/>
    <property type="match status" value="1"/>
</dbReference>
<dbReference type="PANTHER" id="PTHR10853">
    <property type="entry name" value="PELOTA"/>
    <property type="match status" value="1"/>
</dbReference>
<dbReference type="PANTHER" id="PTHR10853:SF0">
    <property type="entry name" value="PROTEIN PELOTA HOMOLOG"/>
    <property type="match status" value="1"/>
</dbReference>
<dbReference type="Pfam" id="PF03463">
    <property type="entry name" value="eRF1_1"/>
    <property type="match status" value="1"/>
</dbReference>
<dbReference type="Pfam" id="PF03464">
    <property type="entry name" value="eRF1_2"/>
    <property type="match status" value="1"/>
</dbReference>
<dbReference type="Pfam" id="PF03465">
    <property type="entry name" value="eRF1_3"/>
    <property type="match status" value="1"/>
</dbReference>
<dbReference type="SMART" id="SM01194">
    <property type="entry name" value="eRF1_1"/>
    <property type="match status" value="1"/>
</dbReference>
<dbReference type="SUPFAM" id="SSF159065">
    <property type="entry name" value="Dom34/Pelota N-terminal domain-like"/>
    <property type="match status" value="1"/>
</dbReference>
<dbReference type="SUPFAM" id="SSF55315">
    <property type="entry name" value="L30e-like"/>
    <property type="match status" value="1"/>
</dbReference>
<dbReference type="SUPFAM" id="SSF53137">
    <property type="entry name" value="Translational machinery components"/>
    <property type="match status" value="1"/>
</dbReference>
<gene>
    <name evidence="1" type="primary">pelA</name>
    <name type="ordered locus">MA_0652</name>
</gene>
<accession>Q8TSZ1</accession>
<reference key="1">
    <citation type="journal article" date="2002" name="Genome Res.">
        <title>The genome of Methanosarcina acetivorans reveals extensive metabolic and physiological diversity.</title>
        <authorList>
            <person name="Galagan J.E."/>
            <person name="Nusbaum C."/>
            <person name="Roy A."/>
            <person name="Endrizzi M.G."/>
            <person name="Macdonald P."/>
            <person name="FitzHugh W."/>
            <person name="Calvo S."/>
            <person name="Engels R."/>
            <person name="Smirnov S."/>
            <person name="Atnoor D."/>
            <person name="Brown A."/>
            <person name="Allen N."/>
            <person name="Naylor J."/>
            <person name="Stange-Thomann N."/>
            <person name="DeArellano K."/>
            <person name="Johnson R."/>
            <person name="Linton L."/>
            <person name="McEwan P."/>
            <person name="McKernan K."/>
            <person name="Talamas J."/>
            <person name="Tirrell A."/>
            <person name="Ye W."/>
            <person name="Zimmer A."/>
            <person name="Barber R.D."/>
            <person name="Cann I."/>
            <person name="Graham D.E."/>
            <person name="Grahame D.A."/>
            <person name="Guss A.M."/>
            <person name="Hedderich R."/>
            <person name="Ingram-Smith C."/>
            <person name="Kuettner H.C."/>
            <person name="Krzycki J.A."/>
            <person name="Leigh J.A."/>
            <person name="Li W."/>
            <person name="Liu J."/>
            <person name="Mukhopadhyay B."/>
            <person name="Reeve J.N."/>
            <person name="Smith K."/>
            <person name="Springer T.A."/>
            <person name="Umayam L.A."/>
            <person name="White O."/>
            <person name="White R.H."/>
            <person name="de Macario E.C."/>
            <person name="Ferry J.G."/>
            <person name="Jarrell K.F."/>
            <person name="Jing H."/>
            <person name="Macario A.J.L."/>
            <person name="Paulsen I.T."/>
            <person name="Pritchett M."/>
            <person name="Sowers K.R."/>
            <person name="Swanson R.V."/>
            <person name="Zinder S.H."/>
            <person name="Lander E."/>
            <person name="Metcalf W.W."/>
            <person name="Birren B."/>
        </authorList>
    </citation>
    <scope>NUCLEOTIDE SEQUENCE [LARGE SCALE GENOMIC DNA]</scope>
    <source>
        <strain>ATCC 35395 / DSM 2834 / JCM 12185 / C2A</strain>
    </source>
</reference>
<name>PELO_METAC</name>
<organism>
    <name type="scientific">Methanosarcina acetivorans (strain ATCC 35395 / DSM 2834 / JCM 12185 / C2A)</name>
    <dbReference type="NCBI Taxonomy" id="188937"/>
    <lineage>
        <taxon>Archaea</taxon>
        <taxon>Methanobacteriati</taxon>
        <taxon>Methanobacteriota</taxon>
        <taxon>Stenosarchaea group</taxon>
        <taxon>Methanomicrobia</taxon>
        <taxon>Methanosarcinales</taxon>
        <taxon>Methanosarcinaceae</taxon>
        <taxon>Methanosarcina</taxon>
    </lineage>
</organism>